<organism>
    <name type="scientific">Bartonella henselae (strain ATCC 49882 / DSM 28221 / CCUG 30454 / Houston 1)</name>
    <name type="common">Rochalimaea henselae</name>
    <dbReference type="NCBI Taxonomy" id="283166"/>
    <lineage>
        <taxon>Bacteria</taxon>
        <taxon>Pseudomonadati</taxon>
        <taxon>Pseudomonadota</taxon>
        <taxon>Alphaproteobacteria</taxon>
        <taxon>Hyphomicrobiales</taxon>
        <taxon>Bartonellaceae</taxon>
        <taxon>Bartonella</taxon>
    </lineage>
</organism>
<reference key="1">
    <citation type="journal article" date="2004" name="Proc. Natl. Acad. Sci. U.S.A.">
        <title>The louse-borne human pathogen Bartonella quintana is a genomic derivative of the zoonotic agent Bartonella henselae.</title>
        <authorList>
            <person name="Alsmark U.C.M."/>
            <person name="Frank A.C."/>
            <person name="Karlberg E.O."/>
            <person name="Legault B.-A."/>
            <person name="Ardell D.H."/>
            <person name="Canbaeck B."/>
            <person name="Eriksson A.-S."/>
            <person name="Naeslund A.K."/>
            <person name="Handley S.A."/>
            <person name="Huvet M."/>
            <person name="La Scola B."/>
            <person name="Holmberg M."/>
            <person name="Andersson S.G.E."/>
        </authorList>
    </citation>
    <scope>NUCLEOTIDE SEQUENCE [LARGE SCALE GENOMIC DNA]</scope>
    <source>
        <strain>ATCC 49882 / DSM 28221 / CCUG 30454 / Houston 1</strain>
    </source>
</reference>
<comment type="catalytic activity">
    <reaction evidence="1">
        <text>tRNA(Phe) + L-phenylalanine + ATP = L-phenylalanyl-tRNA(Phe) + AMP + diphosphate + H(+)</text>
        <dbReference type="Rhea" id="RHEA:19413"/>
        <dbReference type="Rhea" id="RHEA-COMP:9668"/>
        <dbReference type="Rhea" id="RHEA-COMP:9699"/>
        <dbReference type="ChEBI" id="CHEBI:15378"/>
        <dbReference type="ChEBI" id="CHEBI:30616"/>
        <dbReference type="ChEBI" id="CHEBI:33019"/>
        <dbReference type="ChEBI" id="CHEBI:58095"/>
        <dbReference type="ChEBI" id="CHEBI:78442"/>
        <dbReference type="ChEBI" id="CHEBI:78531"/>
        <dbReference type="ChEBI" id="CHEBI:456215"/>
        <dbReference type="EC" id="6.1.1.20"/>
    </reaction>
</comment>
<comment type="cofactor">
    <cofactor evidence="1">
        <name>Mg(2+)</name>
        <dbReference type="ChEBI" id="CHEBI:18420"/>
    </cofactor>
    <text evidence="1">Binds 2 magnesium ions per tetramer.</text>
</comment>
<comment type="subunit">
    <text evidence="1">Tetramer of two alpha and two beta subunits.</text>
</comment>
<comment type="subcellular location">
    <subcellularLocation>
        <location evidence="1">Cytoplasm</location>
    </subcellularLocation>
</comment>
<comment type="similarity">
    <text evidence="1">Belongs to the phenylalanyl-tRNA synthetase beta subunit family. Type 1 subfamily.</text>
</comment>
<sequence length="804" mass="87841">MKFTLSWLKDHLETDASLDEICDKLTAIGLEVDHVDDRSYLKGFVIAKVLTAIKHPDADKLQILSVDTGADKPVQVICGAPNARAGLVGVLALPGTYVPGLDVTLSVGKIRGIESFGMMCSWAELELSNEHDGIIELPEDVPIGASFAVYAGLDDPVIDIGLTPNRSDCTGVRGIARDLAATGIGRLKELSLPQLGTTFETSLDVSLDFSQSALLCLGFAWCEVRNVQNNASPQWMQQRLNAIGLRPINALVDITNYISFDLGRPLHVFDADKIKGNLRVRCGREGEQLQALNGKVYNLGVKDCVIADEEGVVSIAGIMGGERTSCDETTRRVIIESALWDAQSIAQTGRALGLISDARYRFERGVDPAFMETGLEIATELVLRLCGGEGSKMKIVGYQQPEIRQITFPLSEIKRLTYLEIEHEQTMTILTQLGFDSEGQGNVVVVKVPTWRPDIVGKADLVEEVMRIYGLDKIKPIPLESFMEVKDPVLTVSQLRSRITRFALAGRGMRETVTWSFISEKQALAFGGGQAQLKLVNPISADMSVMRPSLLPGLLVAAQRNADRGFPDFALFEVSNIYEDDTPDKQHRVAGGIRRGTEQFGGAGRFWNGNARAVDVFDAKADALAVLEACGLESGKVQIEVGAPDWYHPGRSGVIKLGSKIILGFFGVFHPATLEKLDISGPLCGFEIFLDRIPEPKKKATKSRSPLKLSSLQMVRRDFAFVVDKMVDSSLIVRAASGADKKLIHSVQVFDVFEDLSLGEEKKSVAIEVALQPIERTLTDEDIEELALKLVENVTRMTGASLRC</sequence>
<gene>
    <name evidence="1" type="primary">pheT</name>
    <name type="ordered locus">BH00850</name>
</gene>
<keyword id="KW-0030">Aminoacyl-tRNA synthetase</keyword>
<keyword id="KW-0067">ATP-binding</keyword>
<keyword id="KW-0963">Cytoplasm</keyword>
<keyword id="KW-0436">Ligase</keyword>
<keyword id="KW-0460">Magnesium</keyword>
<keyword id="KW-0479">Metal-binding</keyword>
<keyword id="KW-0547">Nucleotide-binding</keyword>
<keyword id="KW-0648">Protein biosynthesis</keyword>
<keyword id="KW-0694">RNA-binding</keyword>
<keyword id="KW-0820">tRNA-binding</keyword>
<proteinExistence type="inferred from homology"/>
<feature type="chain" id="PRO_0000126846" description="Phenylalanine--tRNA ligase beta subunit">
    <location>
        <begin position="1"/>
        <end position="804"/>
    </location>
</feature>
<feature type="domain" description="tRNA-binding" evidence="1">
    <location>
        <begin position="38"/>
        <end position="148"/>
    </location>
</feature>
<feature type="domain" description="B5" evidence="1">
    <location>
        <begin position="401"/>
        <end position="476"/>
    </location>
</feature>
<feature type="domain" description="FDX-ACB" evidence="1">
    <location>
        <begin position="710"/>
        <end position="803"/>
    </location>
</feature>
<feature type="binding site" evidence="1">
    <location>
        <position position="454"/>
    </location>
    <ligand>
        <name>Mg(2+)</name>
        <dbReference type="ChEBI" id="CHEBI:18420"/>
        <note>shared with alpha subunit</note>
    </ligand>
</feature>
<feature type="binding site" evidence="1">
    <location>
        <position position="460"/>
    </location>
    <ligand>
        <name>Mg(2+)</name>
        <dbReference type="ChEBI" id="CHEBI:18420"/>
        <note>shared with alpha subunit</note>
    </ligand>
</feature>
<feature type="binding site" evidence="1">
    <location>
        <position position="463"/>
    </location>
    <ligand>
        <name>Mg(2+)</name>
        <dbReference type="ChEBI" id="CHEBI:18420"/>
        <note>shared with alpha subunit</note>
    </ligand>
</feature>
<feature type="binding site" evidence="1">
    <location>
        <position position="464"/>
    </location>
    <ligand>
        <name>Mg(2+)</name>
        <dbReference type="ChEBI" id="CHEBI:18420"/>
        <note>shared with alpha subunit</note>
    </ligand>
</feature>
<dbReference type="EC" id="6.1.1.20" evidence="1"/>
<dbReference type="EMBL" id="BX897699">
    <property type="protein sequence ID" value="CAF26901.1"/>
    <property type="molecule type" value="Genomic_DNA"/>
</dbReference>
<dbReference type="RefSeq" id="WP_011180046.1">
    <property type="nucleotide sequence ID" value="NZ_LRIJ02000001.1"/>
</dbReference>
<dbReference type="SMR" id="Q6G5I2"/>
<dbReference type="PaxDb" id="283166-BH00850"/>
<dbReference type="DNASU" id="2866035"/>
<dbReference type="EnsemblBacteria" id="CAF26901">
    <property type="protein sequence ID" value="CAF26901"/>
    <property type="gene ID" value="BH00850"/>
</dbReference>
<dbReference type="GeneID" id="92986371"/>
<dbReference type="KEGG" id="bhe:BH00850"/>
<dbReference type="eggNOG" id="COG0072">
    <property type="taxonomic scope" value="Bacteria"/>
</dbReference>
<dbReference type="eggNOG" id="COG0073">
    <property type="taxonomic scope" value="Bacteria"/>
</dbReference>
<dbReference type="OrthoDB" id="9805455at2"/>
<dbReference type="Proteomes" id="UP000000421">
    <property type="component" value="Chromosome"/>
</dbReference>
<dbReference type="GO" id="GO:0009328">
    <property type="term" value="C:phenylalanine-tRNA ligase complex"/>
    <property type="evidence" value="ECO:0007669"/>
    <property type="project" value="TreeGrafter"/>
</dbReference>
<dbReference type="GO" id="GO:0005524">
    <property type="term" value="F:ATP binding"/>
    <property type="evidence" value="ECO:0007669"/>
    <property type="project" value="UniProtKB-UniRule"/>
</dbReference>
<dbReference type="GO" id="GO:0000287">
    <property type="term" value="F:magnesium ion binding"/>
    <property type="evidence" value="ECO:0007669"/>
    <property type="project" value="UniProtKB-UniRule"/>
</dbReference>
<dbReference type="GO" id="GO:0004826">
    <property type="term" value="F:phenylalanine-tRNA ligase activity"/>
    <property type="evidence" value="ECO:0007669"/>
    <property type="project" value="UniProtKB-UniRule"/>
</dbReference>
<dbReference type="GO" id="GO:0000049">
    <property type="term" value="F:tRNA binding"/>
    <property type="evidence" value="ECO:0007669"/>
    <property type="project" value="UniProtKB-KW"/>
</dbReference>
<dbReference type="GO" id="GO:0006432">
    <property type="term" value="P:phenylalanyl-tRNA aminoacylation"/>
    <property type="evidence" value="ECO:0007669"/>
    <property type="project" value="UniProtKB-UniRule"/>
</dbReference>
<dbReference type="CDD" id="cd00769">
    <property type="entry name" value="PheRS_beta_core"/>
    <property type="match status" value="1"/>
</dbReference>
<dbReference type="CDD" id="cd02796">
    <property type="entry name" value="tRNA_bind_bactPheRS"/>
    <property type="match status" value="1"/>
</dbReference>
<dbReference type="FunFam" id="2.40.50.140:FF:000045">
    <property type="entry name" value="Phenylalanine--tRNA ligase beta subunit"/>
    <property type="match status" value="1"/>
</dbReference>
<dbReference type="Gene3D" id="3.30.56.10">
    <property type="match status" value="2"/>
</dbReference>
<dbReference type="Gene3D" id="3.30.930.10">
    <property type="entry name" value="Bira Bifunctional Protein, Domain 2"/>
    <property type="match status" value="1"/>
</dbReference>
<dbReference type="Gene3D" id="3.30.70.380">
    <property type="entry name" value="Ferrodoxin-fold anticodon-binding domain"/>
    <property type="match status" value="1"/>
</dbReference>
<dbReference type="Gene3D" id="2.40.50.140">
    <property type="entry name" value="Nucleic acid-binding proteins"/>
    <property type="match status" value="1"/>
</dbReference>
<dbReference type="Gene3D" id="3.50.40.10">
    <property type="entry name" value="Phenylalanyl-trna Synthetase, Chain B, domain 3"/>
    <property type="match status" value="1"/>
</dbReference>
<dbReference type="HAMAP" id="MF_00283">
    <property type="entry name" value="Phe_tRNA_synth_beta1"/>
    <property type="match status" value="1"/>
</dbReference>
<dbReference type="InterPro" id="IPR045864">
    <property type="entry name" value="aa-tRNA-synth_II/BPL/LPL"/>
</dbReference>
<dbReference type="InterPro" id="IPR005146">
    <property type="entry name" value="B3/B4_tRNA-bd"/>
</dbReference>
<dbReference type="InterPro" id="IPR009061">
    <property type="entry name" value="DNA-bd_dom_put_sf"/>
</dbReference>
<dbReference type="InterPro" id="IPR005121">
    <property type="entry name" value="Fdx_antiC-bd"/>
</dbReference>
<dbReference type="InterPro" id="IPR036690">
    <property type="entry name" value="Fdx_antiC-bd_sf"/>
</dbReference>
<dbReference type="InterPro" id="IPR012340">
    <property type="entry name" value="NA-bd_OB-fold"/>
</dbReference>
<dbReference type="InterPro" id="IPR045060">
    <property type="entry name" value="Phe-tRNA-ligase_IIc_bsu"/>
</dbReference>
<dbReference type="InterPro" id="IPR004532">
    <property type="entry name" value="Phe-tRNA-ligase_IIc_bsu_bact"/>
</dbReference>
<dbReference type="InterPro" id="IPR020825">
    <property type="entry name" value="Phe-tRNA_synthase-like_B3/B4"/>
</dbReference>
<dbReference type="InterPro" id="IPR041616">
    <property type="entry name" value="PheRS_beta_core"/>
</dbReference>
<dbReference type="InterPro" id="IPR002547">
    <property type="entry name" value="tRNA-bd_dom"/>
</dbReference>
<dbReference type="InterPro" id="IPR033714">
    <property type="entry name" value="tRNA_bind_bactPheRS"/>
</dbReference>
<dbReference type="InterPro" id="IPR005147">
    <property type="entry name" value="tRNA_synthase_B5-dom"/>
</dbReference>
<dbReference type="NCBIfam" id="TIGR00472">
    <property type="entry name" value="pheT_bact"/>
    <property type="match status" value="1"/>
</dbReference>
<dbReference type="NCBIfam" id="NF045760">
    <property type="entry name" value="YtpR"/>
    <property type="match status" value="1"/>
</dbReference>
<dbReference type="PANTHER" id="PTHR10947:SF0">
    <property type="entry name" value="PHENYLALANINE--TRNA LIGASE BETA SUBUNIT"/>
    <property type="match status" value="1"/>
</dbReference>
<dbReference type="PANTHER" id="PTHR10947">
    <property type="entry name" value="PHENYLALANYL-TRNA SYNTHETASE BETA CHAIN AND LEUCINE-RICH REPEAT-CONTAINING PROTEIN 47"/>
    <property type="match status" value="1"/>
</dbReference>
<dbReference type="Pfam" id="PF03483">
    <property type="entry name" value="B3_4"/>
    <property type="match status" value="1"/>
</dbReference>
<dbReference type="Pfam" id="PF03484">
    <property type="entry name" value="B5"/>
    <property type="match status" value="1"/>
</dbReference>
<dbReference type="Pfam" id="PF03147">
    <property type="entry name" value="FDX-ACB"/>
    <property type="match status" value="1"/>
</dbReference>
<dbReference type="Pfam" id="PF01588">
    <property type="entry name" value="tRNA_bind"/>
    <property type="match status" value="1"/>
</dbReference>
<dbReference type="Pfam" id="PF17759">
    <property type="entry name" value="tRNA_synthFbeta"/>
    <property type="match status" value="1"/>
</dbReference>
<dbReference type="SMART" id="SM00873">
    <property type="entry name" value="B3_4"/>
    <property type="match status" value="1"/>
</dbReference>
<dbReference type="SMART" id="SM00874">
    <property type="entry name" value="B5"/>
    <property type="match status" value="1"/>
</dbReference>
<dbReference type="SMART" id="SM00896">
    <property type="entry name" value="FDX-ACB"/>
    <property type="match status" value="1"/>
</dbReference>
<dbReference type="SUPFAM" id="SSF54991">
    <property type="entry name" value="Anticodon-binding domain of PheRS"/>
    <property type="match status" value="1"/>
</dbReference>
<dbReference type="SUPFAM" id="SSF55681">
    <property type="entry name" value="Class II aaRS and biotin synthetases"/>
    <property type="match status" value="1"/>
</dbReference>
<dbReference type="SUPFAM" id="SSF50249">
    <property type="entry name" value="Nucleic acid-binding proteins"/>
    <property type="match status" value="1"/>
</dbReference>
<dbReference type="SUPFAM" id="SSF56037">
    <property type="entry name" value="PheT/TilS domain"/>
    <property type="match status" value="1"/>
</dbReference>
<dbReference type="SUPFAM" id="SSF46955">
    <property type="entry name" value="Putative DNA-binding domain"/>
    <property type="match status" value="1"/>
</dbReference>
<dbReference type="PROSITE" id="PS51483">
    <property type="entry name" value="B5"/>
    <property type="match status" value="1"/>
</dbReference>
<dbReference type="PROSITE" id="PS51447">
    <property type="entry name" value="FDX_ACB"/>
    <property type="match status" value="1"/>
</dbReference>
<dbReference type="PROSITE" id="PS50886">
    <property type="entry name" value="TRBD"/>
    <property type="match status" value="1"/>
</dbReference>
<name>SYFB_BARHE</name>
<accession>Q6G5I2</accession>
<protein>
    <recommendedName>
        <fullName evidence="1">Phenylalanine--tRNA ligase beta subunit</fullName>
        <ecNumber evidence="1">6.1.1.20</ecNumber>
    </recommendedName>
    <alternativeName>
        <fullName evidence="1">Phenylalanyl-tRNA synthetase beta subunit</fullName>
        <shortName evidence="1">PheRS</shortName>
    </alternativeName>
</protein>
<evidence type="ECO:0000255" key="1">
    <source>
        <dbReference type="HAMAP-Rule" id="MF_00283"/>
    </source>
</evidence>